<accession>B2UZ27</accession>
<keyword id="KW-0067">ATP-binding</keyword>
<keyword id="KW-0436">Ligase</keyword>
<keyword id="KW-0547">Nucleotide-binding</keyword>
<keyword id="KW-0648">Protein biosynthesis</keyword>
<comment type="function">
    <text evidence="1">Allows the formation of correctly charged Asn-tRNA(Asn) or Gln-tRNA(Gln) through the transamidation of misacylated Asp-tRNA(Asn) or Glu-tRNA(Gln) in organisms which lack either or both of asparaginyl-tRNA or glutaminyl-tRNA synthetases. The reaction takes place in the presence of glutamine and ATP through an activated phospho-Asp-tRNA(Asn) or phospho-Glu-tRNA(Gln).</text>
</comment>
<comment type="catalytic activity">
    <reaction evidence="1">
        <text>L-glutamyl-tRNA(Gln) + L-glutamine + ATP + H2O = L-glutaminyl-tRNA(Gln) + L-glutamate + ADP + phosphate + H(+)</text>
        <dbReference type="Rhea" id="RHEA:17521"/>
        <dbReference type="Rhea" id="RHEA-COMP:9681"/>
        <dbReference type="Rhea" id="RHEA-COMP:9684"/>
        <dbReference type="ChEBI" id="CHEBI:15377"/>
        <dbReference type="ChEBI" id="CHEBI:15378"/>
        <dbReference type="ChEBI" id="CHEBI:29985"/>
        <dbReference type="ChEBI" id="CHEBI:30616"/>
        <dbReference type="ChEBI" id="CHEBI:43474"/>
        <dbReference type="ChEBI" id="CHEBI:58359"/>
        <dbReference type="ChEBI" id="CHEBI:78520"/>
        <dbReference type="ChEBI" id="CHEBI:78521"/>
        <dbReference type="ChEBI" id="CHEBI:456216"/>
    </reaction>
</comment>
<comment type="catalytic activity">
    <reaction evidence="1">
        <text>L-aspartyl-tRNA(Asn) + L-glutamine + ATP + H2O = L-asparaginyl-tRNA(Asn) + L-glutamate + ADP + phosphate + 2 H(+)</text>
        <dbReference type="Rhea" id="RHEA:14513"/>
        <dbReference type="Rhea" id="RHEA-COMP:9674"/>
        <dbReference type="Rhea" id="RHEA-COMP:9677"/>
        <dbReference type="ChEBI" id="CHEBI:15377"/>
        <dbReference type="ChEBI" id="CHEBI:15378"/>
        <dbReference type="ChEBI" id="CHEBI:29985"/>
        <dbReference type="ChEBI" id="CHEBI:30616"/>
        <dbReference type="ChEBI" id="CHEBI:43474"/>
        <dbReference type="ChEBI" id="CHEBI:58359"/>
        <dbReference type="ChEBI" id="CHEBI:78515"/>
        <dbReference type="ChEBI" id="CHEBI:78516"/>
        <dbReference type="ChEBI" id="CHEBI:456216"/>
    </reaction>
</comment>
<comment type="subunit">
    <text evidence="1">Heterotrimer of A, B and C subunits.</text>
</comment>
<comment type="similarity">
    <text evidence="1">Belongs to the GatB/GatE family. GatB subfamily.</text>
</comment>
<gene>
    <name evidence="1" type="primary">gatB</name>
    <name type="ordered locus">CLH_0399</name>
</gene>
<evidence type="ECO:0000255" key="1">
    <source>
        <dbReference type="HAMAP-Rule" id="MF_00121"/>
    </source>
</evidence>
<proteinExistence type="inferred from homology"/>
<feature type="chain" id="PRO_1000095202" description="Aspartyl/glutamyl-tRNA(Asn/Gln) amidotransferase subunit B">
    <location>
        <begin position="1"/>
        <end position="476"/>
    </location>
</feature>
<name>GATB_CLOBA</name>
<sequence length="476" mass="53698">MEFESVIGLEVHAELLTNTKIYCGCTTEFGGKPNTHVCPVCLGLPGSLPQLNKRVLELGIKAGLALNCEITKVGRMDRKNYFYPDCPKNYQITQDELPICRNGYIDIELESGEVKRIGIERIHIEEDAGKLLHTKRGTLVDFNRAGVPLIEVVSKPDIRTPEEATLYLTKLRSILSSAQISDCKMEEGSLRCDGNISIRERGTEPFGIRSEIKNMNSFKALEKALNYEFDRQVEAVTNGEALSVETRRWDETNNKTIVMRSKEQANDYRYFPEGDLVTLNVSDEWIEEIRNTIPELPYQKADRFVKEYGLPKYDAHVLTLTDSMADYFDECAKLSGDPKAASNWIMGDISRLMKEESTWIEDLKFSPKDLAELIEVIKEGTISSAIGKKVLEDMFAEGKSPKTIIDEKGLKQNNDEGAIRQLVNKVLDENPQVIEQYKSGRTRILGFAVGQVMKETKGQANPGIVNKLVTEEVEKR</sequence>
<protein>
    <recommendedName>
        <fullName evidence="1">Aspartyl/glutamyl-tRNA(Asn/Gln) amidotransferase subunit B</fullName>
        <shortName evidence="1">Asp/Glu-ADT subunit B</shortName>
        <ecNumber evidence="1">6.3.5.-</ecNumber>
    </recommendedName>
</protein>
<reference key="1">
    <citation type="submission" date="2008-05" db="EMBL/GenBank/DDBJ databases">
        <title>Complete genome sequence of Clostridium botulinum E3 str. Alaska E43.</title>
        <authorList>
            <person name="Brinkac L.M."/>
            <person name="Brown J.L."/>
            <person name="Bruce D."/>
            <person name="Detter C."/>
            <person name="Munk C."/>
            <person name="Smith L.A."/>
            <person name="Smith T.J."/>
            <person name="Sutton G."/>
            <person name="Brettin T.S."/>
        </authorList>
    </citation>
    <scope>NUCLEOTIDE SEQUENCE [LARGE SCALE GENOMIC DNA]</scope>
    <source>
        <strain>Alaska E43 / Type E3</strain>
    </source>
</reference>
<organism>
    <name type="scientific">Clostridium botulinum (strain Alaska E43 / Type E3)</name>
    <dbReference type="NCBI Taxonomy" id="508767"/>
    <lineage>
        <taxon>Bacteria</taxon>
        <taxon>Bacillati</taxon>
        <taxon>Bacillota</taxon>
        <taxon>Clostridia</taxon>
        <taxon>Eubacteriales</taxon>
        <taxon>Clostridiaceae</taxon>
        <taxon>Clostridium</taxon>
    </lineage>
</organism>
<dbReference type="EC" id="6.3.5.-" evidence="1"/>
<dbReference type="EMBL" id="CP001078">
    <property type="protein sequence ID" value="ACD51764.1"/>
    <property type="molecule type" value="Genomic_DNA"/>
</dbReference>
<dbReference type="RefSeq" id="WP_012450055.1">
    <property type="nucleotide sequence ID" value="NC_010723.1"/>
</dbReference>
<dbReference type="SMR" id="B2UZ27"/>
<dbReference type="KEGG" id="cbt:CLH_0399"/>
<dbReference type="HOGENOM" id="CLU_019240_0_0_9"/>
<dbReference type="GO" id="GO:0050566">
    <property type="term" value="F:asparaginyl-tRNA synthase (glutamine-hydrolyzing) activity"/>
    <property type="evidence" value="ECO:0007669"/>
    <property type="project" value="RHEA"/>
</dbReference>
<dbReference type="GO" id="GO:0005524">
    <property type="term" value="F:ATP binding"/>
    <property type="evidence" value="ECO:0007669"/>
    <property type="project" value="UniProtKB-KW"/>
</dbReference>
<dbReference type="GO" id="GO:0050567">
    <property type="term" value="F:glutaminyl-tRNA synthase (glutamine-hydrolyzing) activity"/>
    <property type="evidence" value="ECO:0007669"/>
    <property type="project" value="UniProtKB-UniRule"/>
</dbReference>
<dbReference type="GO" id="GO:0070681">
    <property type="term" value="P:glutaminyl-tRNAGln biosynthesis via transamidation"/>
    <property type="evidence" value="ECO:0007669"/>
    <property type="project" value="TreeGrafter"/>
</dbReference>
<dbReference type="GO" id="GO:0006412">
    <property type="term" value="P:translation"/>
    <property type="evidence" value="ECO:0007669"/>
    <property type="project" value="UniProtKB-UniRule"/>
</dbReference>
<dbReference type="FunFam" id="1.10.10.410:FF:000001">
    <property type="entry name" value="Aspartyl/glutamyl-tRNA(Asn/Gln) amidotransferase subunit B"/>
    <property type="match status" value="1"/>
</dbReference>
<dbReference type="FunFam" id="1.10.150.380:FF:000001">
    <property type="entry name" value="Aspartyl/glutamyl-tRNA(Asn/Gln) amidotransferase subunit B"/>
    <property type="match status" value="1"/>
</dbReference>
<dbReference type="Gene3D" id="1.10.10.410">
    <property type="match status" value="1"/>
</dbReference>
<dbReference type="Gene3D" id="1.10.150.380">
    <property type="entry name" value="GatB domain, N-terminal subdomain"/>
    <property type="match status" value="1"/>
</dbReference>
<dbReference type="HAMAP" id="MF_00121">
    <property type="entry name" value="GatB"/>
    <property type="match status" value="1"/>
</dbReference>
<dbReference type="InterPro" id="IPR017959">
    <property type="entry name" value="Asn/Gln-tRNA_amidoTrfase_suB/E"/>
</dbReference>
<dbReference type="InterPro" id="IPR006075">
    <property type="entry name" value="Asn/Gln-tRNA_Trfase_suB/E_cat"/>
</dbReference>
<dbReference type="InterPro" id="IPR018027">
    <property type="entry name" value="Asn/Gln_amidotransferase"/>
</dbReference>
<dbReference type="InterPro" id="IPR003789">
    <property type="entry name" value="Asn/Gln_tRNA_amidoTrase-B-like"/>
</dbReference>
<dbReference type="InterPro" id="IPR004413">
    <property type="entry name" value="GatB"/>
</dbReference>
<dbReference type="InterPro" id="IPR042114">
    <property type="entry name" value="GatB_C_1"/>
</dbReference>
<dbReference type="InterPro" id="IPR023168">
    <property type="entry name" value="GatB_Yqey_C_2"/>
</dbReference>
<dbReference type="InterPro" id="IPR017958">
    <property type="entry name" value="Gln-tRNA_amidoTrfase_suB_CS"/>
</dbReference>
<dbReference type="InterPro" id="IPR014746">
    <property type="entry name" value="Gln_synth/guanido_kin_cat_dom"/>
</dbReference>
<dbReference type="NCBIfam" id="TIGR00133">
    <property type="entry name" value="gatB"/>
    <property type="match status" value="1"/>
</dbReference>
<dbReference type="NCBIfam" id="NF004012">
    <property type="entry name" value="PRK05477.1-2"/>
    <property type="match status" value="1"/>
</dbReference>
<dbReference type="NCBIfam" id="NF004014">
    <property type="entry name" value="PRK05477.1-4"/>
    <property type="match status" value="1"/>
</dbReference>
<dbReference type="PANTHER" id="PTHR11659">
    <property type="entry name" value="GLUTAMYL-TRNA GLN AMIDOTRANSFERASE SUBUNIT B MITOCHONDRIAL AND PROKARYOTIC PET112-RELATED"/>
    <property type="match status" value="1"/>
</dbReference>
<dbReference type="PANTHER" id="PTHR11659:SF0">
    <property type="entry name" value="GLUTAMYL-TRNA(GLN) AMIDOTRANSFERASE SUBUNIT B, MITOCHONDRIAL"/>
    <property type="match status" value="1"/>
</dbReference>
<dbReference type="Pfam" id="PF02934">
    <property type="entry name" value="GatB_N"/>
    <property type="match status" value="1"/>
</dbReference>
<dbReference type="Pfam" id="PF02637">
    <property type="entry name" value="GatB_Yqey"/>
    <property type="match status" value="1"/>
</dbReference>
<dbReference type="SMART" id="SM00845">
    <property type="entry name" value="GatB_Yqey"/>
    <property type="match status" value="1"/>
</dbReference>
<dbReference type="SUPFAM" id="SSF89095">
    <property type="entry name" value="GatB/YqeY motif"/>
    <property type="match status" value="1"/>
</dbReference>
<dbReference type="SUPFAM" id="SSF55931">
    <property type="entry name" value="Glutamine synthetase/guanido kinase"/>
    <property type="match status" value="1"/>
</dbReference>
<dbReference type="PROSITE" id="PS01234">
    <property type="entry name" value="GATB"/>
    <property type="match status" value="1"/>
</dbReference>